<dbReference type="EMBL" id="CP000159">
    <property type="protein sequence ID" value="ABC45575.1"/>
    <property type="status" value="ALT_INIT"/>
    <property type="molecule type" value="Genomic_DNA"/>
</dbReference>
<dbReference type="RefSeq" id="WP_013062207.1">
    <property type="nucleotide sequence ID" value="NC_007677.1"/>
</dbReference>
<dbReference type="RefSeq" id="YP_445880.1">
    <property type="nucleotide sequence ID" value="NC_007677.1"/>
</dbReference>
<dbReference type="SMR" id="Q2S1Q1"/>
<dbReference type="STRING" id="309807.SRU_1762"/>
<dbReference type="EnsemblBacteria" id="ABC45575">
    <property type="protein sequence ID" value="ABC45575"/>
    <property type="gene ID" value="SRU_1762"/>
</dbReference>
<dbReference type="GeneID" id="83728691"/>
<dbReference type="KEGG" id="sru:SRU_1762"/>
<dbReference type="PATRIC" id="fig|309807.25.peg.1829"/>
<dbReference type="eggNOG" id="COG0080">
    <property type="taxonomic scope" value="Bacteria"/>
</dbReference>
<dbReference type="HOGENOM" id="CLU_074237_2_0_10"/>
<dbReference type="OrthoDB" id="9802408at2"/>
<dbReference type="Proteomes" id="UP000008674">
    <property type="component" value="Chromosome"/>
</dbReference>
<dbReference type="GO" id="GO:0022625">
    <property type="term" value="C:cytosolic large ribosomal subunit"/>
    <property type="evidence" value="ECO:0007669"/>
    <property type="project" value="TreeGrafter"/>
</dbReference>
<dbReference type="GO" id="GO:0070180">
    <property type="term" value="F:large ribosomal subunit rRNA binding"/>
    <property type="evidence" value="ECO:0007669"/>
    <property type="project" value="UniProtKB-UniRule"/>
</dbReference>
<dbReference type="GO" id="GO:0003735">
    <property type="term" value="F:structural constituent of ribosome"/>
    <property type="evidence" value="ECO:0007669"/>
    <property type="project" value="InterPro"/>
</dbReference>
<dbReference type="GO" id="GO:0006412">
    <property type="term" value="P:translation"/>
    <property type="evidence" value="ECO:0007669"/>
    <property type="project" value="UniProtKB-UniRule"/>
</dbReference>
<dbReference type="CDD" id="cd00349">
    <property type="entry name" value="Ribosomal_L11"/>
    <property type="match status" value="1"/>
</dbReference>
<dbReference type="FunFam" id="3.30.1550.10:FF:000001">
    <property type="entry name" value="50S ribosomal protein L11"/>
    <property type="match status" value="1"/>
</dbReference>
<dbReference type="Gene3D" id="1.10.10.250">
    <property type="entry name" value="Ribosomal protein L11, C-terminal domain"/>
    <property type="match status" value="1"/>
</dbReference>
<dbReference type="Gene3D" id="3.30.1550.10">
    <property type="entry name" value="Ribosomal protein L11/L12, N-terminal domain"/>
    <property type="match status" value="1"/>
</dbReference>
<dbReference type="HAMAP" id="MF_00736">
    <property type="entry name" value="Ribosomal_uL11"/>
    <property type="match status" value="1"/>
</dbReference>
<dbReference type="InterPro" id="IPR000911">
    <property type="entry name" value="Ribosomal_uL11"/>
</dbReference>
<dbReference type="InterPro" id="IPR006519">
    <property type="entry name" value="Ribosomal_uL11_bac-typ"/>
</dbReference>
<dbReference type="InterPro" id="IPR020783">
    <property type="entry name" value="Ribosomal_uL11_C"/>
</dbReference>
<dbReference type="InterPro" id="IPR036769">
    <property type="entry name" value="Ribosomal_uL11_C_sf"/>
</dbReference>
<dbReference type="InterPro" id="IPR020784">
    <property type="entry name" value="Ribosomal_uL11_N"/>
</dbReference>
<dbReference type="InterPro" id="IPR036796">
    <property type="entry name" value="Ribosomal_uL11_N_sf"/>
</dbReference>
<dbReference type="NCBIfam" id="TIGR01632">
    <property type="entry name" value="L11_bact"/>
    <property type="match status" value="1"/>
</dbReference>
<dbReference type="PANTHER" id="PTHR11661">
    <property type="entry name" value="60S RIBOSOMAL PROTEIN L12"/>
    <property type="match status" value="1"/>
</dbReference>
<dbReference type="PANTHER" id="PTHR11661:SF1">
    <property type="entry name" value="LARGE RIBOSOMAL SUBUNIT PROTEIN UL11M"/>
    <property type="match status" value="1"/>
</dbReference>
<dbReference type="Pfam" id="PF00298">
    <property type="entry name" value="Ribosomal_L11"/>
    <property type="match status" value="1"/>
</dbReference>
<dbReference type="Pfam" id="PF03946">
    <property type="entry name" value="Ribosomal_L11_N"/>
    <property type="match status" value="1"/>
</dbReference>
<dbReference type="SMART" id="SM00649">
    <property type="entry name" value="RL11"/>
    <property type="match status" value="1"/>
</dbReference>
<dbReference type="SUPFAM" id="SSF54747">
    <property type="entry name" value="Ribosomal L11/L12e N-terminal domain"/>
    <property type="match status" value="1"/>
</dbReference>
<dbReference type="SUPFAM" id="SSF46906">
    <property type="entry name" value="Ribosomal protein L11, C-terminal domain"/>
    <property type="match status" value="1"/>
</dbReference>
<protein>
    <recommendedName>
        <fullName evidence="1">Large ribosomal subunit protein uL11</fullName>
    </recommendedName>
    <alternativeName>
        <fullName evidence="2">50S ribosomal protein L11</fullName>
    </alternativeName>
</protein>
<reference key="1">
    <citation type="journal article" date="2005" name="Proc. Natl. Acad. Sci. U.S.A.">
        <title>The genome of Salinibacter ruber: convergence and gene exchange among hyperhalophilic bacteria and archaea.</title>
        <authorList>
            <person name="Mongodin E.F."/>
            <person name="Nelson K.E."/>
            <person name="Daugherty S."/>
            <person name="DeBoy R.T."/>
            <person name="Wister J."/>
            <person name="Khouri H."/>
            <person name="Weidman J."/>
            <person name="Walsh D.A."/>
            <person name="Papke R.T."/>
            <person name="Sanchez Perez G."/>
            <person name="Sharma A.K."/>
            <person name="Nesbo C.L."/>
            <person name="MacLeod D."/>
            <person name="Bapteste E."/>
            <person name="Doolittle W.F."/>
            <person name="Charlebois R.L."/>
            <person name="Legault B."/>
            <person name="Rodriguez-Valera F."/>
        </authorList>
    </citation>
    <scope>NUCLEOTIDE SEQUENCE [LARGE SCALE GENOMIC DNA]</scope>
    <source>
        <strain>DSM 13855 / CECT 5946 / M31</strain>
    </source>
</reference>
<comment type="function">
    <text evidence="1">Forms part of the ribosomal stalk which helps the ribosome interact with GTP-bound translation factors.</text>
</comment>
<comment type="subunit">
    <text evidence="1">Part of the ribosomal stalk of the 50S ribosomal subunit. Interacts with L10 and the large rRNA to form the base of the stalk. L10 forms an elongated spine to which L12 dimers bind in a sequential fashion forming a multimeric L10(L12)X complex.</text>
</comment>
<comment type="PTM">
    <text evidence="1">One or more lysine residues are methylated.</text>
</comment>
<comment type="similarity">
    <text evidence="1">Belongs to the universal ribosomal protein uL11 family.</text>
</comment>
<comment type="sequence caution" evidence="2">
    <conflict type="erroneous initiation">
        <sequence resource="EMBL-CDS" id="ABC45575"/>
    </conflict>
</comment>
<accession>Q2S1Q1</accession>
<proteinExistence type="inferred from homology"/>
<sequence>MAAPVEQTIKLQIKGGQANPAPPIGPALGQHGVNIMEFCKAFNSRTEDRMGTLLPVEITVYADRSFDFIVKSPPASVLLKQKADIETAAGDPLRDDAGTVTWDDCLDIADQKLQDLNAHTVEKGASMVAGTARSMGITVEGKPAHE</sequence>
<organism>
    <name type="scientific">Salinibacter ruber (strain DSM 13855 / M31)</name>
    <dbReference type="NCBI Taxonomy" id="309807"/>
    <lineage>
        <taxon>Bacteria</taxon>
        <taxon>Pseudomonadati</taxon>
        <taxon>Rhodothermota</taxon>
        <taxon>Rhodothermia</taxon>
        <taxon>Rhodothermales</taxon>
        <taxon>Salinibacteraceae</taxon>
        <taxon>Salinibacter</taxon>
    </lineage>
</organism>
<evidence type="ECO:0000255" key="1">
    <source>
        <dbReference type="HAMAP-Rule" id="MF_00736"/>
    </source>
</evidence>
<evidence type="ECO:0000305" key="2"/>
<keyword id="KW-0488">Methylation</keyword>
<keyword id="KW-1185">Reference proteome</keyword>
<keyword id="KW-0687">Ribonucleoprotein</keyword>
<keyword id="KW-0689">Ribosomal protein</keyword>
<keyword id="KW-0694">RNA-binding</keyword>
<keyword id="KW-0699">rRNA-binding</keyword>
<feature type="chain" id="PRO_0000258208" description="Large ribosomal subunit protein uL11">
    <location>
        <begin position="1"/>
        <end position="146"/>
    </location>
</feature>
<name>RL11_SALRD</name>
<gene>
    <name evidence="1" type="primary">rplK</name>
    <name type="ordered locus">SRU_1762</name>
</gene>